<evidence type="ECO:0000255" key="1">
    <source>
        <dbReference type="HAMAP-Rule" id="MF_01337"/>
    </source>
</evidence>
<evidence type="ECO:0000305" key="2"/>
<keyword id="KW-0687">Ribonucleoprotein</keyword>
<keyword id="KW-0689">Ribosomal protein</keyword>
<keyword id="KW-0694">RNA-binding</keyword>
<keyword id="KW-0699">rRNA-binding</keyword>
<proteinExistence type="inferred from homology"/>
<comment type="function">
    <text evidence="1">This is one of the proteins that bind and probably mediate the attachment of the 5S RNA into the large ribosomal subunit, where it forms part of the central protuberance.</text>
</comment>
<comment type="subunit">
    <text evidence="1">Part of the 50S ribosomal subunit; part of the 5S rRNA/L5/L18/L25 subcomplex. Contacts the 5S and 23S rRNAs.</text>
</comment>
<comment type="similarity">
    <text evidence="1">Belongs to the universal ribosomal protein uL18 family.</text>
</comment>
<organism>
    <name type="scientific">Vibrio parahaemolyticus serotype O3:K6 (strain RIMD 2210633)</name>
    <dbReference type="NCBI Taxonomy" id="223926"/>
    <lineage>
        <taxon>Bacteria</taxon>
        <taxon>Pseudomonadati</taxon>
        <taxon>Pseudomonadota</taxon>
        <taxon>Gammaproteobacteria</taxon>
        <taxon>Vibrionales</taxon>
        <taxon>Vibrionaceae</taxon>
        <taxon>Vibrio</taxon>
    </lineage>
</organism>
<sequence length="117" mass="12616">MDKKASRIRRATRARRKIAELGATRLVVHRTPRHVYAQVIAANGSEVIAAASTVEKAIREQVKYTGNVDAAKAVGKAVAERALEKGVTAVAFDRSGFQYHGRVAALAESAREAGLKF</sequence>
<accession>Q87SZ7</accession>
<feature type="chain" id="PRO_0000131382" description="Large ribosomal subunit protein uL18">
    <location>
        <begin position="1"/>
        <end position="117"/>
    </location>
</feature>
<dbReference type="EMBL" id="BA000031">
    <property type="protein sequence ID" value="BAC58536.1"/>
    <property type="molecule type" value="Genomic_DNA"/>
</dbReference>
<dbReference type="RefSeq" id="NP_796652.1">
    <property type="nucleotide sequence ID" value="NC_004603.1"/>
</dbReference>
<dbReference type="RefSeq" id="WP_005435088.1">
    <property type="nucleotide sequence ID" value="NC_004603.1"/>
</dbReference>
<dbReference type="SMR" id="Q87SZ7"/>
<dbReference type="GeneID" id="94023441"/>
<dbReference type="KEGG" id="vpa:VP0273"/>
<dbReference type="PATRIC" id="fig|223926.6.peg.264"/>
<dbReference type="eggNOG" id="COG0256">
    <property type="taxonomic scope" value="Bacteria"/>
</dbReference>
<dbReference type="HOGENOM" id="CLU_098841_0_1_6"/>
<dbReference type="PRO" id="PR:Q87SZ7"/>
<dbReference type="Proteomes" id="UP000002493">
    <property type="component" value="Chromosome 1"/>
</dbReference>
<dbReference type="GO" id="GO:0022625">
    <property type="term" value="C:cytosolic large ribosomal subunit"/>
    <property type="evidence" value="ECO:0007669"/>
    <property type="project" value="TreeGrafter"/>
</dbReference>
<dbReference type="GO" id="GO:0008097">
    <property type="term" value="F:5S rRNA binding"/>
    <property type="evidence" value="ECO:0007669"/>
    <property type="project" value="TreeGrafter"/>
</dbReference>
<dbReference type="GO" id="GO:0003735">
    <property type="term" value="F:structural constituent of ribosome"/>
    <property type="evidence" value="ECO:0007669"/>
    <property type="project" value="InterPro"/>
</dbReference>
<dbReference type="GO" id="GO:0006412">
    <property type="term" value="P:translation"/>
    <property type="evidence" value="ECO:0007669"/>
    <property type="project" value="UniProtKB-UniRule"/>
</dbReference>
<dbReference type="CDD" id="cd00432">
    <property type="entry name" value="Ribosomal_L18_L5e"/>
    <property type="match status" value="1"/>
</dbReference>
<dbReference type="FunFam" id="3.30.420.100:FF:000001">
    <property type="entry name" value="50S ribosomal protein L18"/>
    <property type="match status" value="1"/>
</dbReference>
<dbReference type="Gene3D" id="3.30.420.100">
    <property type="match status" value="1"/>
</dbReference>
<dbReference type="HAMAP" id="MF_01337_B">
    <property type="entry name" value="Ribosomal_uL18_B"/>
    <property type="match status" value="1"/>
</dbReference>
<dbReference type="InterPro" id="IPR004389">
    <property type="entry name" value="Ribosomal_uL18_bac-type"/>
</dbReference>
<dbReference type="InterPro" id="IPR005484">
    <property type="entry name" value="Ribosomal_uL18_bac/euk"/>
</dbReference>
<dbReference type="NCBIfam" id="TIGR00060">
    <property type="entry name" value="L18_bact"/>
    <property type="match status" value="1"/>
</dbReference>
<dbReference type="PANTHER" id="PTHR12899">
    <property type="entry name" value="39S RIBOSOMAL PROTEIN L18, MITOCHONDRIAL"/>
    <property type="match status" value="1"/>
</dbReference>
<dbReference type="PANTHER" id="PTHR12899:SF3">
    <property type="entry name" value="LARGE RIBOSOMAL SUBUNIT PROTEIN UL18M"/>
    <property type="match status" value="1"/>
</dbReference>
<dbReference type="Pfam" id="PF00861">
    <property type="entry name" value="Ribosomal_L18p"/>
    <property type="match status" value="1"/>
</dbReference>
<dbReference type="SUPFAM" id="SSF53137">
    <property type="entry name" value="Translational machinery components"/>
    <property type="match status" value="1"/>
</dbReference>
<gene>
    <name evidence="1" type="primary">rplR</name>
    <name type="ordered locus">VP0273</name>
</gene>
<reference key="1">
    <citation type="journal article" date="2003" name="Lancet">
        <title>Genome sequence of Vibrio parahaemolyticus: a pathogenic mechanism distinct from that of V. cholerae.</title>
        <authorList>
            <person name="Makino K."/>
            <person name="Oshima K."/>
            <person name="Kurokawa K."/>
            <person name="Yokoyama K."/>
            <person name="Uda T."/>
            <person name="Tagomori K."/>
            <person name="Iijima Y."/>
            <person name="Najima M."/>
            <person name="Nakano M."/>
            <person name="Yamashita A."/>
            <person name="Kubota Y."/>
            <person name="Kimura S."/>
            <person name="Yasunaga T."/>
            <person name="Honda T."/>
            <person name="Shinagawa H."/>
            <person name="Hattori M."/>
            <person name="Iida T."/>
        </authorList>
    </citation>
    <scope>NUCLEOTIDE SEQUENCE [LARGE SCALE GENOMIC DNA]</scope>
    <source>
        <strain>RIMD 2210633</strain>
    </source>
</reference>
<protein>
    <recommendedName>
        <fullName evidence="1">Large ribosomal subunit protein uL18</fullName>
    </recommendedName>
    <alternativeName>
        <fullName evidence="2">50S ribosomal protein L18</fullName>
    </alternativeName>
</protein>
<name>RL18_VIBPA</name>